<feature type="signal peptide" evidence="1">
    <location>
        <begin position="1"/>
        <end position="23"/>
    </location>
</feature>
<feature type="chain" id="PRO_0000232758" description="Protocadherin-11 X-linked">
    <location>
        <begin position="24"/>
        <end position="1347"/>
    </location>
</feature>
<feature type="topological domain" description="Extracellular" evidence="1">
    <location>
        <begin position="24"/>
        <end position="812"/>
    </location>
</feature>
<feature type="transmembrane region" description="Helical" evidence="1">
    <location>
        <begin position="813"/>
        <end position="833"/>
    </location>
</feature>
<feature type="topological domain" description="Cytoplasmic" evidence="1">
    <location>
        <begin position="834"/>
        <end position="1347"/>
    </location>
</feature>
<feature type="domain" description="Cadherin 1" evidence="2">
    <location>
        <begin position="26"/>
        <end position="139"/>
    </location>
</feature>
<feature type="domain" description="Cadherin 2" evidence="2">
    <location>
        <begin position="140"/>
        <end position="249"/>
    </location>
</feature>
<feature type="domain" description="Cadherin 3" evidence="2">
    <location>
        <begin position="250"/>
        <end position="355"/>
    </location>
</feature>
<feature type="domain" description="Cadherin 4" evidence="2">
    <location>
        <begin position="362"/>
        <end position="466"/>
    </location>
</feature>
<feature type="domain" description="Cadherin 5" evidence="2">
    <location>
        <begin position="467"/>
        <end position="570"/>
    </location>
</feature>
<feature type="domain" description="Cadherin 6" evidence="2">
    <location>
        <begin position="571"/>
        <end position="673"/>
    </location>
</feature>
<feature type="domain" description="Cadherin 7" evidence="2">
    <location>
        <begin position="677"/>
        <end position="795"/>
    </location>
</feature>
<feature type="region of interest" description="Disordered" evidence="3">
    <location>
        <begin position="1057"/>
        <end position="1091"/>
    </location>
</feature>
<feature type="region of interest" description="Disordered" evidence="3">
    <location>
        <begin position="1097"/>
        <end position="1116"/>
    </location>
</feature>
<feature type="region of interest" description="Disordered" evidence="3">
    <location>
        <begin position="1326"/>
        <end position="1347"/>
    </location>
</feature>
<feature type="glycosylation site" description="N-linked (GlcNAc...) asparagine" evidence="1">
    <location>
        <position position="27"/>
    </location>
</feature>
<feature type="glycosylation site" description="N-linked (GlcNAc...) asparagine" evidence="1">
    <location>
        <position position="48"/>
    </location>
</feature>
<feature type="glycosylation site" description="N-linked (GlcNAc...) asparagine" evidence="1">
    <location>
        <position position="54"/>
    </location>
</feature>
<feature type="glycosylation site" description="N-linked (GlcNAc...) asparagine" evidence="1">
    <location>
        <position position="344"/>
    </location>
</feature>
<feature type="glycosylation site" description="N-linked (GlcNAc...) asparagine" evidence="1">
    <location>
        <position position="553"/>
    </location>
</feature>
<feature type="glycosylation site" description="N-linked (GlcNAc...) asparagine" evidence="1">
    <location>
        <position position="773"/>
    </location>
</feature>
<feature type="splice variant" id="VSP_017979" description="In isoform 5." evidence="11 12">
    <location>
        <begin position="1012"/>
        <end position="1048"/>
    </location>
</feature>
<feature type="splice variant" id="VSP_017980" description="In isoform 2." evidence="8">
    <original>PMKEVVRSCTPMKE</original>
    <variation>TDSRTSTIEICSEI</variation>
    <location>
        <begin position="1012"/>
        <end position="1025"/>
    </location>
</feature>
<feature type="splice variant" id="VSP_017981" description="In isoform 7." evidence="7 10">
    <original>PMKEVVRSCT</original>
    <variation>VGIQVSNTTF</variation>
    <location>
        <begin position="1012"/>
        <end position="1021"/>
    </location>
</feature>
<feature type="splice variant" id="VSP_017982" description="In isoform 7." evidence="7 10">
    <location>
        <begin position="1022"/>
        <end position="1347"/>
    </location>
</feature>
<feature type="splice variant" id="VSP_017983" description="In isoform 2." evidence="8">
    <location>
        <begin position="1026"/>
        <end position="1347"/>
    </location>
</feature>
<feature type="splice variant" id="VSP_017984" description="In isoform 3 and isoform 4." evidence="9 12">
    <location>
        <begin position="1039"/>
        <end position="1048"/>
    </location>
</feature>
<feature type="splice variant" id="VSP_017985" description="In isoform 6." evidence="12">
    <original>SQRRVTFHLPEGSQESS</original>
    <variation>TVLTSSSPSAMTLSYLD</variation>
    <location>
        <begin position="1049"/>
        <end position="1065"/>
    </location>
</feature>
<feature type="splice variant" id="VSP_017986" description="In isoform 6." evidence="12">
    <location>
        <begin position="1066"/>
        <end position="1347"/>
    </location>
</feature>
<feature type="splice variant" id="VSP_017987" description="In isoform 8 and isoform 4." evidence="12">
    <location>
        <begin position="1116"/>
        <end position="1123"/>
    </location>
</feature>
<feature type="sequence variant" id="VAR_036109" description="In a colorectal cancer sample; somatic mutation; dbSNP:rs1451414636." evidence="6">
    <original>D</original>
    <variation>G</variation>
    <location>
        <position position="42"/>
    </location>
</feature>
<feature type="sequence variant" id="VAR_048575" description="In dbSNP:rs4252205.">
    <original>R</original>
    <variation>Q</variation>
    <location>
        <position position="1018"/>
    </location>
</feature>
<feature type="sequence conflict" description="In Ref. 4; AAK82655/AAK82656." evidence="13" ref="4">
    <original>TND</original>
    <variation>PNA</variation>
    <location>
        <begin position="242"/>
        <end position="244"/>
    </location>
</feature>
<feature type="sequence conflict" description="In Ref. 4; AAK82655/AAK82656." evidence="13" ref="4">
    <original>T</original>
    <variation>P</variation>
    <location>
        <position position="252"/>
    </location>
</feature>
<organism>
    <name type="scientific">Homo sapiens</name>
    <name type="common">Human</name>
    <dbReference type="NCBI Taxonomy" id="9606"/>
    <lineage>
        <taxon>Eukaryota</taxon>
        <taxon>Metazoa</taxon>
        <taxon>Chordata</taxon>
        <taxon>Craniata</taxon>
        <taxon>Vertebrata</taxon>
        <taxon>Euteleostomi</taxon>
        <taxon>Mammalia</taxon>
        <taxon>Eutheria</taxon>
        <taxon>Euarchontoglires</taxon>
        <taxon>Primates</taxon>
        <taxon>Haplorrhini</taxon>
        <taxon>Catarrhini</taxon>
        <taxon>Hominidae</taxon>
        <taxon>Homo</taxon>
    </lineage>
</organism>
<keyword id="KW-0025">Alternative splicing</keyword>
<keyword id="KW-0106">Calcium</keyword>
<keyword id="KW-0130">Cell adhesion</keyword>
<keyword id="KW-1003">Cell membrane</keyword>
<keyword id="KW-0325">Glycoprotein</keyword>
<keyword id="KW-0472">Membrane</keyword>
<keyword id="KW-1267">Proteomics identification</keyword>
<keyword id="KW-1185">Reference proteome</keyword>
<keyword id="KW-0677">Repeat</keyword>
<keyword id="KW-0732">Signal</keyword>
<keyword id="KW-0812">Transmembrane</keyword>
<keyword id="KW-1133">Transmembrane helix</keyword>
<gene>
    <name type="primary">PCDH11X</name>
    <name type="synonym">KIAA1326</name>
    <name type="synonym">PCDH11</name>
    <name type="synonym">PCDHX</name>
</gene>
<accession>Q9BZA7</accession>
<accession>A6NIQ4</accession>
<accession>Q2TJH0</accession>
<accession>Q2TJH1</accession>
<accession>Q2TJH3</accession>
<accession>Q5JVZ0</accession>
<accession>Q70LR8</accession>
<accession>Q70LS7</accession>
<accession>Q70LS8</accession>
<accession>Q70LS9</accession>
<accession>Q70LT7</accession>
<accession>Q70LT8</accession>
<accession>Q70LT9</accession>
<accession>Q70LU0</accession>
<accession>Q70LU1</accession>
<accession>Q96RV4</accession>
<accession>Q96RW0</accession>
<accession>Q9BZA6</accession>
<accession>Q9H4E0</accession>
<accession>Q9P2M0</accession>
<accession>Q9P2X5</accession>
<proteinExistence type="evidence at protein level"/>
<evidence type="ECO:0000255" key="1"/>
<evidence type="ECO:0000255" key="2">
    <source>
        <dbReference type="PROSITE-ProRule" id="PRU00043"/>
    </source>
</evidence>
<evidence type="ECO:0000256" key="3">
    <source>
        <dbReference type="SAM" id="MobiDB-lite"/>
    </source>
</evidence>
<evidence type="ECO:0000269" key="4">
    <source>
    </source>
</evidence>
<evidence type="ECO:0000269" key="5">
    <source>
    </source>
</evidence>
<evidence type="ECO:0000269" key="6">
    <source>
    </source>
</evidence>
<evidence type="ECO:0000303" key="7">
    <source>
    </source>
</evidence>
<evidence type="ECO:0000303" key="8">
    <source>
    </source>
</evidence>
<evidence type="ECO:0000303" key="9">
    <source>
    </source>
</evidence>
<evidence type="ECO:0000303" key="10">
    <source>
    </source>
</evidence>
<evidence type="ECO:0000303" key="11">
    <source ref="4"/>
</evidence>
<evidence type="ECO:0000303" key="12">
    <source ref="5"/>
</evidence>
<evidence type="ECO:0000305" key="13"/>
<name>PC11X_HUMAN</name>
<comment type="function">
    <text>Potential calcium-dependent cell-adhesion protein.</text>
</comment>
<comment type="subcellular location">
    <subcellularLocation>
        <location evidence="13">Cell membrane</location>
        <topology evidence="13">Single-pass type I membrane protein</topology>
    </subcellularLocation>
</comment>
<comment type="alternative products">
    <event type="alternative splicing"/>
    <isoform>
        <id>Q9BZA7-1</id>
        <name>1</name>
        <sequence type="displayed"/>
    </isoform>
    <isoform>
        <id>Q9BZA7-2</id>
        <name>2</name>
        <sequence type="described" ref="VSP_017980 VSP_017983"/>
    </isoform>
    <isoform>
        <id>Q9BZA7-3</id>
        <name>3</name>
        <sequence type="described" ref="VSP_017984"/>
    </isoform>
    <isoform>
        <id>Q9BZA7-4</id>
        <name>4</name>
        <sequence type="described" ref="VSP_017984 VSP_017987"/>
    </isoform>
    <isoform>
        <id>Q9BZA7-5</id>
        <name>5</name>
        <sequence type="described" ref="VSP_017979"/>
    </isoform>
    <isoform>
        <id>Q9BZA7-6</id>
        <name>6</name>
        <sequence type="described" ref="VSP_017985 VSP_017986"/>
    </isoform>
    <isoform>
        <id>Q9BZA7-7</id>
        <name>7</name>
        <name>Protocadherin-Xa</name>
        <sequence type="described" ref="VSP_017981 VSP_017982"/>
    </isoform>
    <isoform>
        <id>Q9BZA7-8</id>
        <name>8</name>
        <sequence type="described" ref="VSP_017987"/>
    </isoform>
    <text>Additional isoforms seem to exist.</text>
</comment>
<comment type="tissue specificity">
    <text evidence="4 5">Expressed strongly in fetal brain and brain (cortex, amygdala, thalamus, substantia nigra, hippocampus, caudate nucleus and corpus callosum). Expressed at low level in testis.</text>
</comment>
<sequence length="1347" mass="147558">MDLLSGTYIFAVLLACVVFHSGAQEKNYTIREEMPENVLIGDLLKDLNLSLIPNKSLTTAMQFKLVYKTGDVPLIRIEEDTGEIFTTGARIDREKLCAGIPRDEHCFYEVEVAILPDEIFRLVKIRFLIEDINDNAPLFPATVINISIPENSAINSKYTLPAAVDPDVGINGVQNYELIKSQNIFGLDVIETPEGDKMPQLIVQKELDREEKDTYVMKVKVEDGGFPQRSSTAILQVSVTDTNDNHPVFKETEIEVSIPENAPVGTSVTQLHATDADIGENAKIHFSFSNLVSNIARRLFHLNATTGLITIKEPLDREETPNHKLLVLASDGGLMPARAMVLVNVTDVNDNVPSIDIRYIVNPVNDTVVLSENIPLNTKIALITVTDKDADHNGRVTCFTDHEIPFRLRPVFSNQFLLETAAYLDYESTKEYAIKLLAADAGKPPLNQSAMLFIKVKDENDNAPVFTQSFVTVSIPENNSPGIQLTKVSAMDADSGPNAKINYLLGPDAPPEFSLDCRTGMLTVVKKLDREKEDKYLFTILAKDNGVPPLTSNVTVFVSIIDQNDNSPVFTHNEYNFYVPENLPRHGTVGLITVTDPDYGDNSAVTLSILDENDDFTIDSQTGVIRPNISFDREKQESYTFYVKAEDGGRVSRSSSAKVTINVVDVNDNKPVFIVPPSNCSYELVLPSTNPGTVVFQVIAVDNDTGMNAEVRYSIVGGNTRDLFAIDQETGNITLMEKCDVTDLGLHRVLVKANDLGQPDSLFSVVIVNLFVNESVTNATLINELVRKSTEAPVTPNTEIADVSSPTSDYVKILVAAVAGTITVVVVIFITAVVRCRQAPHLKAAQKNKQNSEWATPNPENRQMIMMKKKKKKKKHSPKNLLLNFVTIEETKADDVDSDGNRVTLDLPIDLEEQTMGKYNWVTTPTTFKPDSPDLARHYKSASPQPAFQIQPETPLNSKHHIIQELPLDNTFVACDSISKCSSSSSDPYSVSDCGYPVTTFEVPVSVHTRPPMKEVVRSCTPMKESTTMEIWIHPQPQRKSEGKVAGKSQRRVTFHLPEGSQESSSDGGLGDHDAGSLTSTSHGLPLGYPQEEYFDRATPSNRTEGDGNSDPESTFIPGLKKAAEITVQPTVEEASDNCTQECLIYGHSDACWMPASLDHSSSSQAQASALCHSPPLSQASTQHHSPRVTQTIALCHSPPVTQTIALCHSPPPIQVSALHHSPPLVQATALHHSPPSAQASALCYSPPLAQAAAISHSSPLPQVIALHRSQAQSSVSLQQGWVQGADGLCSVDQGVQGSATSQFYTMSERLHPSDDSIKVIPLTTFTPRQQARPSRGDSPIMEEHPL</sequence>
<dbReference type="EMBL" id="AB026187">
    <property type="protein sequence ID" value="BAA90765.1"/>
    <property type="molecule type" value="mRNA"/>
</dbReference>
<dbReference type="EMBL" id="AJ276804">
    <property type="protein sequence ID" value="CAC13123.1"/>
    <property type="molecule type" value="mRNA"/>
</dbReference>
<dbReference type="EMBL" id="AF332218">
    <property type="protein sequence ID" value="AAK13470.1"/>
    <property type="molecule type" value="mRNA"/>
</dbReference>
<dbReference type="EMBL" id="AF332219">
    <property type="protein sequence ID" value="AAK13471.1"/>
    <property type="molecule type" value="mRNA"/>
</dbReference>
<dbReference type="EMBL" id="AF206516">
    <property type="protein sequence ID" value="AAK82655.1"/>
    <property type="molecule type" value="mRNA"/>
</dbReference>
<dbReference type="EMBL" id="AF217288">
    <property type="protein sequence ID" value="AAK82656.1"/>
    <property type="molecule type" value="mRNA"/>
</dbReference>
<dbReference type="EMBL" id="AY861432">
    <property type="protein sequence ID" value="AAX56122.1"/>
    <property type="molecule type" value="mRNA"/>
</dbReference>
<dbReference type="EMBL" id="AY861433">
    <property type="protein sequence ID" value="AAX56123.1"/>
    <property type="molecule type" value="mRNA"/>
</dbReference>
<dbReference type="EMBL" id="AY861434">
    <property type="protein sequence ID" value="AAX56124.1"/>
    <property type="molecule type" value="mRNA"/>
</dbReference>
<dbReference type="EMBL" id="AY861435">
    <property type="protein sequence ID" value="AAX56125.1"/>
    <property type="molecule type" value="mRNA"/>
</dbReference>
<dbReference type="EMBL" id="AC004388">
    <property type="status" value="NOT_ANNOTATED_CDS"/>
    <property type="molecule type" value="Genomic_DNA"/>
</dbReference>
<dbReference type="EMBL" id="AL121869">
    <property type="status" value="NOT_ANNOTATED_CDS"/>
    <property type="molecule type" value="Genomic_DNA"/>
</dbReference>
<dbReference type="EMBL" id="AL133274">
    <property type="status" value="NOT_ANNOTATED_CDS"/>
    <property type="molecule type" value="Genomic_DNA"/>
</dbReference>
<dbReference type="EMBL" id="AL133321">
    <property type="status" value="NOT_ANNOTATED_CDS"/>
    <property type="molecule type" value="Genomic_DNA"/>
</dbReference>
<dbReference type="EMBL" id="AJ564931">
    <property type="protein sequence ID" value="CAD92410.1"/>
    <property type="molecule type" value="mRNA"/>
</dbReference>
<dbReference type="EMBL" id="AJ564932">
    <property type="protein sequence ID" value="CAD92411.1"/>
    <property type="molecule type" value="mRNA"/>
</dbReference>
<dbReference type="EMBL" id="AJ564933">
    <property type="protein sequence ID" value="CAD92412.1"/>
    <property type="molecule type" value="mRNA"/>
</dbReference>
<dbReference type="EMBL" id="AJ564934">
    <property type="protein sequence ID" value="CAD92413.1"/>
    <property type="molecule type" value="mRNA"/>
</dbReference>
<dbReference type="EMBL" id="AJ564935">
    <property type="protein sequence ID" value="CAD92414.1"/>
    <property type="molecule type" value="mRNA"/>
</dbReference>
<dbReference type="EMBL" id="AJ564936">
    <property type="protein sequence ID" value="CAD92415.1"/>
    <property type="molecule type" value="mRNA"/>
</dbReference>
<dbReference type="EMBL" id="AJ564942">
    <property type="protein sequence ID" value="CAD92421.1"/>
    <property type="molecule type" value="mRNA"/>
</dbReference>
<dbReference type="EMBL" id="AJ564945">
    <property type="protein sequence ID" value="CAD92424.1"/>
    <property type="molecule type" value="mRNA"/>
</dbReference>
<dbReference type="EMBL" id="AJ564946">
    <property type="protein sequence ID" value="CAD92425.1"/>
    <property type="molecule type" value="mRNA"/>
</dbReference>
<dbReference type="EMBL" id="AJ564947">
    <property type="protein sequence ID" value="CAD92426.1"/>
    <property type="molecule type" value="mRNA"/>
</dbReference>
<dbReference type="EMBL" id="AB037747">
    <property type="protein sequence ID" value="BAA92564.1"/>
    <property type="molecule type" value="mRNA"/>
</dbReference>
<dbReference type="CCDS" id="CCDS14461.1">
    <molecule id="Q9BZA7-1"/>
</dbReference>
<dbReference type="CCDS" id="CCDS14462.1">
    <molecule id="Q9BZA7-3"/>
</dbReference>
<dbReference type="CCDS" id="CCDS55458.1">
    <molecule id="Q9BZA7-6"/>
</dbReference>
<dbReference type="CCDS" id="CCDS55459.1">
    <molecule id="Q9BZA7-8"/>
</dbReference>
<dbReference type="CCDS" id="CCDS55460.1">
    <molecule id="Q9BZA7-4"/>
</dbReference>
<dbReference type="CCDS" id="CCDS55461.1">
    <molecule id="Q9BZA7-5"/>
</dbReference>
<dbReference type="RefSeq" id="NP_001161832.1">
    <molecule id="Q9BZA7-8"/>
    <property type="nucleotide sequence ID" value="NM_001168360.1"/>
</dbReference>
<dbReference type="RefSeq" id="NP_001161833.1">
    <molecule id="Q9BZA7-6"/>
    <property type="nucleotide sequence ID" value="NM_001168361.1"/>
</dbReference>
<dbReference type="RefSeq" id="NP_001161834.1">
    <molecule id="Q9BZA7-5"/>
    <property type="nucleotide sequence ID" value="NM_001168362.1"/>
</dbReference>
<dbReference type="RefSeq" id="NP_001161835.1">
    <molecule id="Q9BZA7-4"/>
    <property type="nucleotide sequence ID" value="NM_001168363.1"/>
</dbReference>
<dbReference type="RefSeq" id="NP_116750.1">
    <molecule id="Q9BZA7-1"/>
    <property type="nucleotide sequence ID" value="NM_032968.5"/>
</dbReference>
<dbReference type="RefSeq" id="NP_116751.1">
    <molecule id="Q9BZA7-3"/>
    <property type="nucleotide sequence ID" value="NM_032969.4"/>
</dbReference>
<dbReference type="RefSeq" id="XP_011529216.1">
    <molecule id="Q9BZA7-1"/>
    <property type="nucleotide sequence ID" value="XM_011530914.3"/>
</dbReference>
<dbReference type="RefSeq" id="XP_016884911.1">
    <property type="nucleotide sequence ID" value="XM_017029422.1"/>
</dbReference>
<dbReference type="RefSeq" id="XP_054182818.1">
    <molecule id="Q9BZA7-1"/>
    <property type="nucleotide sequence ID" value="XM_054326843.1"/>
</dbReference>
<dbReference type="SMR" id="Q9BZA7"/>
<dbReference type="BioGRID" id="118142">
    <property type="interactions" value="9"/>
</dbReference>
<dbReference type="FunCoup" id="Q9BZA7">
    <property type="interactions" value="5"/>
</dbReference>
<dbReference type="IntAct" id="Q9BZA7">
    <property type="interactions" value="5"/>
</dbReference>
<dbReference type="STRING" id="9606.ENSP00000362186"/>
<dbReference type="GlyConnect" id="2065">
    <property type="glycosylation" value="1 N-Linked glycan (1 site)"/>
</dbReference>
<dbReference type="GlyCosmos" id="Q9BZA7">
    <property type="glycosylation" value="6 sites, 2 glycans"/>
</dbReference>
<dbReference type="GlyGen" id="Q9BZA7">
    <property type="glycosylation" value="9 sites, 2 N-linked glycans (1 site), 2 O-linked glycans (3 sites)"/>
</dbReference>
<dbReference type="iPTMnet" id="Q9BZA7"/>
<dbReference type="PhosphoSitePlus" id="Q9BZA7"/>
<dbReference type="BioMuta" id="PCDH11X"/>
<dbReference type="DMDM" id="74761344"/>
<dbReference type="jPOST" id="Q9BZA7"/>
<dbReference type="MassIVE" id="Q9BZA7"/>
<dbReference type="PaxDb" id="9606-ENSP00000362186"/>
<dbReference type="PeptideAtlas" id="Q9BZA7"/>
<dbReference type="ProteomicsDB" id="79788">
    <molecule id="Q9BZA7-1"/>
</dbReference>
<dbReference type="ProteomicsDB" id="79789">
    <molecule id="Q9BZA7-2"/>
</dbReference>
<dbReference type="ProteomicsDB" id="79790">
    <molecule id="Q9BZA7-3"/>
</dbReference>
<dbReference type="ProteomicsDB" id="79791">
    <molecule id="Q9BZA7-4"/>
</dbReference>
<dbReference type="ProteomicsDB" id="79792">
    <molecule id="Q9BZA7-5"/>
</dbReference>
<dbReference type="ProteomicsDB" id="79793">
    <molecule id="Q9BZA7-6"/>
</dbReference>
<dbReference type="ProteomicsDB" id="79794">
    <molecule id="Q9BZA7-7"/>
</dbReference>
<dbReference type="ProteomicsDB" id="79795">
    <molecule id="Q9BZA7-8"/>
</dbReference>
<dbReference type="Antibodypedia" id="28445">
    <property type="antibodies" value="97 antibodies from 18 providers"/>
</dbReference>
<dbReference type="DNASU" id="27328"/>
<dbReference type="Ensembl" id="ENST00000361655.6">
    <molecule id="Q9BZA7-4"/>
    <property type="protein sequence ID" value="ENSP00000355105.2"/>
    <property type="gene ID" value="ENSG00000102290.23"/>
</dbReference>
<dbReference type="Ensembl" id="ENST00000373088.5">
    <molecule id="Q9BZA7-5"/>
    <property type="protein sequence ID" value="ENSP00000362180.1"/>
    <property type="gene ID" value="ENSG00000102290.23"/>
</dbReference>
<dbReference type="Ensembl" id="ENST00000373094.5">
    <molecule id="Q9BZA7-1"/>
    <property type="protein sequence ID" value="ENSP00000362186.1"/>
    <property type="gene ID" value="ENSG00000102290.23"/>
</dbReference>
<dbReference type="Ensembl" id="ENST00000373097.5">
    <molecule id="Q9BZA7-3"/>
    <property type="protein sequence ID" value="ENSP00000362189.1"/>
    <property type="gene ID" value="ENSG00000102290.23"/>
</dbReference>
<dbReference type="Ensembl" id="ENST00000406881.3">
    <molecule id="Q9BZA7-8"/>
    <property type="protein sequence ID" value="ENSP00000384758.1"/>
    <property type="gene ID" value="ENSG00000102290.23"/>
</dbReference>
<dbReference type="Ensembl" id="ENST00000504220.6">
    <molecule id="Q9BZA7-6"/>
    <property type="protein sequence ID" value="ENSP00000423762.1"/>
    <property type="gene ID" value="ENSG00000102290.23"/>
</dbReference>
<dbReference type="Ensembl" id="ENST00000682573.1">
    <molecule id="Q9BZA7-1"/>
    <property type="protein sequence ID" value="ENSP00000507225.1"/>
    <property type="gene ID" value="ENSG00000102290.23"/>
</dbReference>
<dbReference type="GeneID" id="27328"/>
<dbReference type="KEGG" id="hsa:27328"/>
<dbReference type="MANE-Select" id="ENST00000682573.1">
    <property type="protein sequence ID" value="ENSP00000507225.1"/>
    <property type="RefSeq nucleotide sequence ID" value="NM_032968.5"/>
    <property type="RefSeq protein sequence ID" value="NP_116750.1"/>
</dbReference>
<dbReference type="UCSC" id="uc004efk.3">
    <molecule id="Q9BZA7-1"/>
    <property type="organism name" value="human"/>
</dbReference>
<dbReference type="AGR" id="HGNC:8656"/>
<dbReference type="CTD" id="27328"/>
<dbReference type="DisGeNET" id="27328"/>
<dbReference type="GeneCards" id="PCDH11X"/>
<dbReference type="HGNC" id="HGNC:8656">
    <property type="gene designation" value="PCDH11X"/>
</dbReference>
<dbReference type="HPA" id="ENSG00000102290">
    <property type="expression patterns" value="Group enriched (brain, ovary)"/>
</dbReference>
<dbReference type="MalaCards" id="PCDH11X"/>
<dbReference type="MIM" id="300246">
    <property type="type" value="gene"/>
</dbReference>
<dbReference type="neXtProt" id="NX_Q9BZA7"/>
<dbReference type="OpenTargets" id="ENSG00000102290"/>
<dbReference type="PharmGKB" id="PA32996"/>
<dbReference type="VEuPathDB" id="HostDB:ENSG00000102290"/>
<dbReference type="eggNOG" id="ENOG502QPMK">
    <property type="taxonomic scope" value="Eukaryota"/>
</dbReference>
<dbReference type="GeneTree" id="ENSGT00940000158335"/>
<dbReference type="HOGENOM" id="CLU_006480_5_2_1"/>
<dbReference type="InParanoid" id="Q9BZA7"/>
<dbReference type="OMA" id="IHTRQVM"/>
<dbReference type="OrthoDB" id="6252479at2759"/>
<dbReference type="PAN-GO" id="Q9BZA7">
    <property type="GO annotations" value="2 GO annotations based on evolutionary models"/>
</dbReference>
<dbReference type="PhylomeDB" id="Q9BZA7"/>
<dbReference type="TreeFam" id="TF320624"/>
<dbReference type="PathwayCommons" id="Q9BZA7"/>
<dbReference type="SignaLink" id="Q9BZA7"/>
<dbReference type="SIGNOR" id="Q9BZA7"/>
<dbReference type="BioGRID-ORCS" id="27328">
    <property type="hits" value="21 hits in 753 CRISPR screens"/>
</dbReference>
<dbReference type="ChiTaRS" id="PCDH11X">
    <property type="organism name" value="human"/>
</dbReference>
<dbReference type="GeneWiki" id="PCDH11X"/>
<dbReference type="GenomeRNAi" id="27328"/>
<dbReference type="Pharos" id="Q9BZA7">
    <property type="development level" value="Tbio"/>
</dbReference>
<dbReference type="PRO" id="PR:Q9BZA7"/>
<dbReference type="Proteomes" id="UP000005640">
    <property type="component" value="Chromosome X"/>
</dbReference>
<dbReference type="RNAct" id="Q9BZA7">
    <property type="molecule type" value="protein"/>
</dbReference>
<dbReference type="Bgee" id="ENSG00000102290">
    <property type="expression patterns" value="Expressed in cortical plate and 60 other cell types or tissues"/>
</dbReference>
<dbReference type="GO" id="GO:0005886">
    <property type="term" value="C:plasma membrane"/>
    <property type="evidence" value="ECO:0000318"/>
    <property type="project" value="GO_Central"/>
</dbReference>
<dbReference type="GO" id="GO:0005509">
    <property type="term" value="F:calcium ion binding"/>
    <property type="evidence" value="ECO:0007669"/>
    <property type="project" value="InterPro"/>
</dbReference>
<dbReference type="GO" id="GO:0007155">
    <property type="term" value="P:cell adhesion"/>
    <property type="evidence" value="ECO:0000318"/>
    <property type="project" value="GO_Central"/>
</dbReference>
<dbReference type="GO" id="GO:0007156">
    <property type="term" value="P:homophilic cell adhesion via plasma membrane adhesion molecules"/>
    <property type="evidence" value="ECO:0007669"/>
    <property type="project" value="InterPro"/>
</dbReference>
<dbReference type="CDD" id="cd11304">
    <property type="entry name" value="Cadherin_repeat"/>
    <property type="match status" value="5"/>
</dbReference>
<dbReference type="FunFam" id="2.60.40.60:FF:000005">
    <property type="entry name" value="Protocadherin 9"/>
    <property type="match status" value="2"/>
</dbReference>
<dbReference type="FunFam" id="2.60.40.60:FF:000016">
    <property type="entry name" value="Protocadherin 9"/>
    <property type="match status" value="1"/>
</dbReference>
<dbReference type="FunFam" id="2.60.40.60:FF:000030">
    <property type="entry name" value="Protocadherin 9"/>
    <property type="match status" value="1"/>
</dbReference>
<dbReference type="FunFam" id="2.60.40.60:FF:000036">
    <property type="entry name" value="Protocadherin 9"/>
    <property type="match status" value="1"/>
</dbReference>
<dbReference type="FunFam" id="2.60.40.60:FF:000069">
    <property type="entry name" value="Protocadherin-11 X-linked"/>
    <property type="match status" value="1"/>
</dbReference>
<dbReference type="FunFam" id="2.60.40.60:FF:000077">
    <property type="entry name" value="Protocadherin-11 X-linked"/>
    <property type="match status" value="1"/>
</dbReference>
<dbReference type="Gene3D" id="2.60.40.60">
    <property type="entry name" value="Cadherins"/>
    <property type="match status" value="7"/>
</dbReference>
<dbReference type="InterPro" id="IPR002126">
    <property type="entry name" value="Cadherin-like_dom"/>
</dbReference>
<dbReference type="InterPro" id="IPR015919">
    <property type="entry name" value="Cadherin-like_sf"/>
</dbReference>
<dbReference type="InterPro" id="IPR020894">
    <property type="entry name" value="Cadherin_CS"/>
</dbReference>
<dbReference type="InterPro" id="IPR013164">
    <property type="entry name" value="Cadherin_N"/>
</dbReference>
<dbReference type="InterPro" id="IPR013585">
    <property type="entry name" value="Protocadherin"/>
</dbReference>
<dbReference type="InterPro" id="IPR050174">
    <property type="entry name" value="Protocadherin/Cadherin-CA"/>
</dbReference>
<dbReference type="PANTHER" id="PTHR24028">
    <property type="entry name" value="CADHERIN-87A"/>
    <property type="match status" value="1"/>
</dbReference>
<dbReference type="PANTHER" id="PTHR24028:SF254">
    <property type="entry name" value="PROTOCADHERIN-11 X-LINKED-RELATED"/>
    <property type="match status" value="1"/>
</dbReference>
<dbReference type="Pfam" id="PF00028">
    <property type="entry name" value="Cadherin"/>
    <property type="match status" value="6"/>
</dbReference>
<dbReference type="Pfam" id="PF08266">
    <property type="entry name" value="Cadherin_2"/>
    <property type="match status" value="1"/>
</dbReference>
<dbReference type="Pfam" id="PF08374">
    <property type="entry name" value="Protocadherin"/>
    <property type="match status" value="1"/>
</dbReference>
<dbReference type="PRINTS" id="PR00205">
    <property type="entry name" value="CADHERIN"/>
</dbReference>
<dbReference type="SMART" id="SM00112">
    <property type="entry name" value="CA"/>
    <property type="match status" value="6"/>
</dbReference>
<dbReference type="SUPFAM" id="SSF49313">
    <property type="entry name" value="Cadherin-like"/>
    <property type="match status" value="6"/>
</dbReference>
<dbReference type="PROSITE" id="PS00232">
    <property type="entry name" value="CADHERIN_1"/>
    <property type="match status" value="5"/>
</dbReference>
<dbReference type="PROSITE" id="PS50268">
    <property type="entry name" value="CADHERIN_2"/>
    <property type="match status" value="7"/>
</dbReference>
<reference key="1">
    <citation type="journal article" date="1999" name="Genomics">
        <title>Identification of a novel protocadherin gene (PCDH11) on the human XY homology region in Xq21.3.</title>
        <authorList>
            <person name="Yoshida K."/>
            <person name="Sugano S."/>
        </authorList>
    </citation>
    <scope>NUCLEOTIDE SEQUENCE [MRNA] (ISOFORM 7)</scope>
    <scope>TISSUE SPECIFICITY</scope>
    <source>
        <tissue>Brain</tissue>
    </source>
</reference>
<reference key="2">
    <citation type="journal article" date="2000" name="Mamm. Genome">
        <title>Conservation of PCDHX in mammals; expression of human X/Y genes predominantly in brain.</title>
        <authorList>
            <person name="Blanco P."/>
            <person name="Sargent C.A."/>
            <person name="Boucher C."/>
            <person name="Mitchell M."/>
            <person name="Affara N."/>
        </authorList>
    </citation>
    <scope>NUCLEOTIDE SEQUENCE [MRNA] (ISOFORM 2)</scope>
    <scope>TISSUE SPECIFICITY</scope>
    <source>
        <tissue>Brain</tissue>
    </source>
</reference>
<reference key="3">
    <citation type="journal article" date="2003" name="Nature">
        <title>The male-specific region of the human Y chromosome is a mosaic of discrete sequence classes.</title>
        <authorList>
            <person name="Skaletsky H."/>
            <person name="Kuroda-Kawaguchi T."/>
            <person name="Minx P.J."/>
            <person name="Cordum H.S."/>
            <person name="Hillier L.W."/>
            <person name="Brown L.G."/>
            <person name="Repping S."/>
            <person name="Pyntikova T."/>
            <person name="Ali J."/>
            <person name="Bieri T."/>
            <person name="Chinwalla A."/>
            <person name="Delehaunty A."/>
            <person name="Delehaunty K."/>
            <person name="Du H."/>
            <person name="Fewell G."/>
            <person name="Fulton L."/>
            <person name="Fulton R."/>
            <person name="Graves T.A."/>
            <person name="Hou S.-F."/>
            <person name="Latrielle P."/>
            <person name="Leonard S."/>
            <person name="Mardis E."/>
            <person name="Maupin R."/>
            <person name="McPherson J."/>
            <person name="Miner T."/>
            <person name="Nash W."/>
            <person name="Nguyen C."/>
            <person name="Ozersky P."/>
            <person name="Pepin K."/>
            <person name="Rock S."/>
            <person name="Rohlfing T."/>
            <person name="Scott K."/>
            <person name="Schultz B."/>
            <person name="Strong C."/>
            <person name="Tin-Wollam A."/>
            <person name="Yang S.-P."/>
            <person name="Waterston R.H."/>
            <person name="Wilson R.K."/>
            <person name="Rozen S."/>
            <person name="Page D.C."/>
        </authorList>
    </citation>
    <scope>NUCLEOTIDE SEQUENCE [MRNA] (ISOFORMS 1 AND 3)</scope>
    <source>
        <tissue>Brain</tissue>
    </source>
</reference>
<reference key="4">
    <citation type="submission" date="1999-11" db="EMBL/GenBank/DDBJ databases">
        <title>Identification and cloning of a human chromosome X-linked protocadherin gene with seven extracellular domains and an unusual large cytoplasmic domain.</title>
        <authorList>
            <person name="Kools P.F.J."/>
            <person name="van Roy F."/>
        </authorList>
    </citation>
    <scope>NUCLEOTIDE SEQUENCE [MRNA] (ISOFORMS 1 AND 5)</scope>
</reference>
<reference key="5">
    <citation type="submission" date="2004-12" db="EMBL/GenBank/DDBJ databases">
        <title>Delta-protocadherins: a subfamily of protocadherins expressed differentially in the mouse nervous system.</title>
        <authorList>
            <person name="Vanhalst K."/>
            <person name="Kools P."/>
            <person name="Staes K."/>
            <person name="van Roy F."/>
            <person name="Redies C."/>
        </authorList>
    </citation>
    <scope>NUCLEOTIDE SEQUENCE [MRNA] (ISOFORMS 4; 5; 6 AND 8)</scope>
    <source>
        <tissue>Fetal brain</tissue>
    </source>
</reference>
<reference key="6">
    <citation type="journal article" date="2005" name="Nature">
        <title>The DNA sequence of the human X chromosome.</title>
        <authorList>
            <person name="Ross M.T."/>
            <person name="Grafham D.V."/>
            <person name="Coffey A.J."/>
            <person name="Scherer S."/>
            <person name="McLay K."/>
            <person name="Muzny D."/>
            <person name="Platzer M."/>
            <person name="Howell G.R."/>
            <person name="Burrows C."/>
            <person name="Bird C.P."/>
            <person name="Frankish A."/>
            <person name="Lovell F.L."/>
            <person name="Howe K.L."/>
            <person name="Ashurst J.L."/>
            <person name="Fulton R.S."/>
            <person name="Sudbrak R."/>
            <person name="Wen G."/>
            <person name="Jones M.C."/>
            <person name="Hurles M.E."/>
            <person name="Andrews T.D."/>
            <person name="Scott C.E."/>
            <person name="Searle S."/>
            <person name="Ramser J."/>
            <person name="Whittaker A."/>
            <person name="Deadman R."/>
            <person name="Carter N.P."/>
            <person name="Hunt S.E."/>
            <person name="Chen R."/>
            <person name="Cree A."/>
            <person name="Gunaratne P."/>
            <person name="Havlak P."/>
            <person name="Hodgson A."/>
            <person name="Metzker M.L."/>
            <person name="Richards S."/>
            <person name="Scott G."/>
            <person name="Steffen D."/>
            <person name="Sodergren E."/>
            <person name="Wheeler D.A."/>
            <person name="Worley K.C."/>
            <person name="Ainscough R."/>
            <person name="Ambrose K.D."/>
            <person name="Ansari-Lari M.A."/>
            <person name="Aradhya S."/>
            <person name="Ashwell R.I."/>
            <person name="Babbage A.K."/>
            <person name="Bagguley C.L."/>
            <person name="Ballabio A."/>
            <person name="Banerjee R."/>
            <person name="Barker G.E."/>
            <person name="Barlow K.F."/>
            <person name="Barrett I.P."/>
            <person name="Bates K.N."/>
            <person name="Beare D.M."/>
            <person name="Beasley H."/>
            <person name="Beasley O."/>
            <person name="Beck A."/>
            <person name="Bethel G."/>
            <person name="Blechschmidt K."/>
            <person name="Brady N."/>
            <person name="Bray-Allen S."/>
            <person name="Bridgeman A.M."/>
            <person name="Brown A.J."/>
            <person name="Brown M.J."/>
            <person name="Bonnin D."/>
            <person name="Bruford E.A."/>
            <person name="Buhay C."/>
            <person name="Burch P."/>
            <person name="Burford D."/>
            <person name="Burgess J."/>
            <person name="Burrill W."/>
            <person name="Burton J."/>
            <person name="Bye J.M."/>
            <person name="Carder C."/>
            <person name="Carrel L."/>
            <person name="Chako J."/>
            <person name="Chapman J.C."/>
            <person name="Chavez D."/>
            <person name="Chen E."/>
            <person name="Chen G."/>
            <person name="Chen Y."/>
            <person name="Chen Z."/>
            <person name="Chinault C."/>
            <person name="Ciccodicola A."/>
            <person name="Clark S.Y."/>
            <person name="Clarke G."/>
            <person name="Clee C.M."/>
            <person name="Clegg S."/>
            <person name="Clerc-Blankenburg K."/>
            <person name="Clifford K."/>
            <person name="Cobley V."/>
            <person name="Cole C.G."/>
            <person name="Conquer J.S."/>
            <person name="Corby N."/>
            <person name="Connor R.E."/>
            <person name="David R."/>
            <person name="Davies J."/>
            <person name="Davis C."/>
            <person name="Davis J."/>
            <person name="Delgado O."/>
            <person name="Deshazo D."/>
            <person name="Dhami P."/>
            <person name="Ding Y."/>
            <person name="Dinh H."/>
            <person name="Dodsworth S."/>
            <person name="Draper H."/>
            <person name="Dugan-Rocha S."/>
            <person name="Dunham A."/>
            <person name="Dunn M."/>
            <person name="Durbin K.J."/>
            <person name="Dutta I."/>
            <person name="Eades T."/>
            <person name="Ellwood M."/>
            <person name="Emery-Cohen A."/>
            <person name="Errington H."/>
            <person name="Evans K.L."/>
            <person name="Faulkner L."/>
            <person name="Francis F."/>
            <person name="Frankland J."/>
            <person name="Fraser A.E."/>
            <person name="Galgoczy P."/>
            <person name="Gilbert J."/>
            <person name="Gill R."/>
            <person name="Gloeckner G."/>
            <person name="Gregory S.G."/>
            <person name="Gribble S."/>
            <person name="Griffiths C."/>
            <person name="Grocock R."/>
            <person name="Gu Y."/>
            <person name="Gwilliam R."/>
            <person name="Hamilton C."/>
            <person name="Hart E.A."/>
            <person name="Hawes A."/>
            <person name="Heath P.D."/>
            <person name="Heitmann K."/>
            <person name="Hennig S."/>
            <person name="Hernandez J."/>
            <person name="Hinzmann B."/>
            <person name="Ho S."/>
            <person name="Hoffs M."/>
            <person name="Howden P.J."/>
            <person name="Huckle E.J."/>
            <person name="Hume J."/>
            <person name="Hunt P.J."/>
            <person name="Hunt A.R."/>
            <person name="Isherwood J."/>
            <person name="Jacob L."/>
            <person name="Johnson D."/>
            <person name="Jones S."/>
            <person name="de Jong P.J."/>
            <person name="Joseph S.S."/>
            <person name="Keenan S."/>
            <person name="Kelly S."/>
            <person name="Kershaw J.K."/>
            <person name="Khan Z."/>
            <person name="Kioschis P."/>
            <person name="Klages S."/>
            <person name="Knights A.J."/>
            <person name="Kosiura A."/>
            <person name="Kovar-Smith C."/>
            <person name="Laird G.K."/>
            <person name="Langford C."/>
            <person name="Lawlor S."/>
            <person name="Leversha M."/>
            <person name="Lewis L."/>
            <person name="Liu W."/>
            <person name="Lloyd C."/>
            <person name="Lloyd D.M."/>
            <person name="Loulseged H."/>
            <person name="Loveland J.E."/>
            <person name="Lovell J.D."/>
            <person name="Lozado R."/>
            <person name="Lu J."/>
            <person name="Lyne R."/>
            <person name="Ma J."/>
            <person name="Maheshwari M."/>
            <person name="Matthews L.H."/>
            <person name="McDowall J."/>
            <person name="McLaren S."/>
            <person name="McMurray A."/>
            <person name="Meidl P."/>
            <person name="Meitinger T."/>
            <person name="Milne S."/>
            <person name="Miner G."/>
            <person name="Mistry S.L."/>
            <person name="Morgan M."/>
            <person name="Morris S."/>
            <person name="Mueller I."/>
            <person name="Mullikin J.C."/>
            <person name="Nguyen N."/>
            <person name="Nordsiek G."/>
            <person name="Nyakatura G."/>
            <person name="O'dell C.N."/>
            <person name="Okwuonu G."/>
            <person name="Palmer S."/>
            <person name="Pandian R."/>
            <person name="Parker D."/>
            <person name="Parrish J."/>
            <person name="Pasternak S."/>
            <person name="Patel D."/>
            <person name="Pearce A.V."/>
            <person name="Pearson D.M."/>
            <person name="Pelan S.E."/>
            <person name="Perez L."/>
            <person name="Porter K.M."/>
            <person name="Ramsey Y."/>
            <person name="Reichwald K."/>
            <person name="Rhodes S."/>
            <person name="Ridler K.A."/>
            <person name="Schlessinger D."/>
            <person name="Schueler M.G."/>
            <person name="Sehra H.K."/>
            <person name="Shaw-Smith C."/>
            <person name="Shen H."/>
            <person name="Sheridan E.M."/>
            <person name="Shownkeen R."/>
            <person name="Skuce C.D."/>
            <person name="Smith M.L."/>
            <person name="Sotheran E.C."/>
            <person name="Steingruber H.E."/>
            <person name="Steward C.A."/>
            <person name="Storey R."/>
            <person name="Swann R.M."/>
            <person name="Swarbreck D."/>
            <person name="Tabor P.E."/>
            <person name="Taudien S."/>
            <person name="Taylor T."/>
            <person name="Teague B."/>
            <person name="Thomas K."/>
            <person name="Thorpe A."/>
            <person name="Timms K."/>
            <person name="Tracey A."/>
            <person name="Trevanion S."/>
            <person name="Tromans A.C."/>
            <person name="d'Urso M."/>
            <person name="Verduzco D."/>
            <person name="Villasana D."/>
            <person name="Waldron L."/>
            <person name="Wall M."/>
            <person name="Wang Q."/>
            <person name="Warren J."/>
            <person name="Warry G.L."/>
            <person name="Wei X."/>
            <person name="West A."/>
            <person name="Whitehead S.L."/>
            <person name="Whiteley M.N."/>
            <person name="Wilkinson J.E."/>
            <person name="Willey D.L."/>
            <person name="Williams G."/>
            <person name="Williams L."/>
            <person name="Williamson A."/>
            <person name="Williamson H."/>
            <person name="Wilming L."/>
            <person name="Woodmansey R.L."/>
            <person name="Wray P.W."/>
            <person name="Yen J."/>
            <person name="Zhang J."/>
            <person name="Zhou J."/>
            <person name="Zoghbi H."/>
            <person name="Zorilla S."/>
            <person name="Buck D."/>
            <person name="Reinhardt R."/>
            <person name="Poustka A."/>
            <person name="Rosenthal A."/>
            <person name="Lehrach H."/>
            <person name="Meindl A."/>
            <person name="Minx P.J."/>
            <person name="Hillier L.W."/>
            <person name="Willard H.F."/>
            <person name="Wilson R.K."/>
            <person name="Waterston R.H."/>
            <person name="Rice C.M."/>
            <person name="Vaudin M."/>
            <person name="Coulson A."/>
            <person name="Nelson D.L."/>
            <person name="Weinstock G."/>
            <person name="Sulston J.E."/>
            <person name="Durbin R.M."/>
            <person name="Hubbard T."/>
            <person name="Gibbs R.A."/>
            <person name="Beck S."/>
            <person name="Rogers J."/>
            <person name="Bentley D.R."/>
        </authorList>
    </citation>
    <scope>NUCLEOTIDE SEQUENCE [LARGE SCALE GENOMIC DNA]</scope>
</reference>
<reference key="7">
    <citation type="journal article" date="2004" name="Mamm. Genome">
        <title>Protocadherin X (PCDHX) and Y (PCDHY) genes; multiple mRNA isoforms encoding variant signal peptides and cytoplasmic domains.</title>
        <authorList>
            <person name="Blanco-Arias P."/>
            <person name="Sargent C.A."/>
            <person name="Affara N.A."/>
        </authorList>
    </citation>
    <scope>NUCLEOTIDE SEQUENCE [MRNA] OF 1-1011; 1049-1114 AND 1124-1347</scope>
    <scope>NUCLEOTIDE SEQUENCE [MRNA] OF 181-1347 (ISOFORM 7)</scope>
    <scope>ALTERNATIVE SPLICING</scope>
</reference>
<reference key="8">
    <citation type="journal article" date="2000" name="DNA Res.">
        <title>Prediction of the coding sequences of unidentified human genes. XVI. The complete sequences of 150 new cDNA clones from brain which code for large proteins in vitro.</title>
        <authorList>
            <person name="Nagase T."/>
            <person name="Kikuno R."/>
            <person name="Ishikawa K."/>
            <person name="Hirosawa M."/>
            <person name="Ohara O."/>
        </authorList>
    </citation>
    <scope>NUCLEOTIDE SEQUENCE [LARGE SCALE MRNA] OF 924-1347</scope>
    <source>
        <tissue>Brain</tissue>
    </source>
</reference>
<reference key="9">
    <citation type="journal article" date="2006" name="Science">
        <title>The consensus coding sequences of human breast and colorectal cancers.</title>
        <authorList>
            <person name="Sjoeblom T."/>
            <person name="Jones S."/>
            <person name="Wood L.D."/>
            <person name="Parsons D.W."/>
            <person name="Lin J."/>
            <person name="Barber T.D."/>
            <person name="Mandelker D."/>
            <person name="Leary R.J."/>
            <person name="Ptak J."/>
            <person name="Silliman N."/>
            <person name="Szabo S."/>
            <person name="Buckhaults P."/>
            <person name="Farrell C."/>
            <person name="Meeh P."/>
            <person name="Markowitz S.D."/>
            <person name="Willis J."/>
            <person name="Dawson D."/>
            <person name="Willson J.K.V."/>
            <person name="Gazdar A.F."/>
            <person name="Hartigan J."/>
            <person name="Wu L."/>
            <person name="Liu C."/>
            <person name="Parmigiani G."/>
            <person name="Park B.H."/>
            <person name="Bachman K.E."/>
            <person name="Papadopoulos N."/>
            <person name="Vogelstein B."/>
            <person name="Kinzler K.W."/>
            <person name="Velculescu V.E."/>
        </authorList>
    </citation>
    <scope>VARIANT [LARGE SCALE ANALYSIS] GLY-42</scope>
</reference>
<protein>
    <recommendedName>
        <fullName>Protocadherin-11 X-linked</fullName>
        <shortName>Protocadherin-11</shortName>
    </recommendedName>
    <alternativeName>
        <fullName>Protocadherin on the X chromosome</fullName>
        <shortName>PCDH-X</shortName>
    </alternativeName>
    <alternativeName>
        <fullName>Protocadherin-S</fullName>
    </alternativeName>
</protein>